<evidence type="ECO:0000255" key="1">
    <source>
        <dbReference type="HAMAP-Rule" id="MF_02004"/>
    </source>
</evidence>
<sequence>MDKTYNPQDIEQSLYQGWEEKGYFKPSGQGVPYSIMIPPPNVTGSLHMGHAFQDTIMDTLTRFKRMQGNNTLWQVGTDHAGIATQMLVERKLHAEEGKTRHDLGREDFINKIWEWKKESGGTITKQLRRLGASVDWDRERFTMDDGLSEAVKEVFVRLHKENLIYRGKRLVNWDPKLHTAISDLEVENKDKQGHMWNLRYPLADGVKTQDGKDYIVVATTRPETMLGDSGVAVNPDDERYIDLIGKEILLPIVNRRIKIVADEHADKDKGTGCVKITPAHDFNDNEVGKRHKMPMINIFDKDAAILTQGETYSFDGKELEFDAPIPERLHGLDRFAARKAIVAEFEELGLLEKIEDHGLTVPYGDRSGVVIEPLLTDQWYVRVAPLAEPAKEAVKNGDIQFVPKQYENMYFSWMNDVQDWCISRQLWWGHRIPAWYDSEGNVFVGRDEAEVRRENNIADSVTLSQDEDVLDTWFSSALWTFSTQGWPANTDDLKTFHPSDVLVTGFDIIFFWVARMIMMTLHFIKDENGKPQVPFKTVYVTGLIRDDNGDKMSKSKGNVLDPLDMIDGIELEELVQKRTGNMMQPKLAAKIEKDTRKVFAGGIEAHGTDALRFTLAAMASTGRDINWDMNRLEGYRNFCNKLWNASRYVLMNTEEQDCGFATDAQKELSLADRWILGQFESTVKSYTEHLDNYRFDLAANTLYEFTWHQFCDWYLELTKPVLFKGNEAQQRGTRNTLITVLESLLRLMHPMMPYITETIWQRVAPLAGLETENTSIMVQAFPVYNAASVDAKAMDDLEWVKQFILAIRNIRGEMDISPSKPLSVLLANASSDDVRRIEENNSFLASLAKIEEFTMLENKDDAPACAASYVGNLEIMIPMAGLIDVEAELSRINKQLEKAEKGLAQVQNKLANEKFVNNAPEAVLAKENAKLAEFSDAKTKLLEQKAKIESL</sequence>
<accession>Q3II73</accession>
<organism>
    <name type="scientific">Pseudoalteromonas translucida (strain TAC 125)</name>
    <dbReference type="NCBI Taxonomy" id="326442"/>
    <lineage>
        <taxon>Bacteria</taxon>
        <taxon>Pseudomonadati</taxon>
        <taxon>Pseudomonadota</taxon>
        <taxon>Gammaproteobacteria</taxon>
        <taxon>Alteromonadales</taxon>
        <taxon>Pseudoalteromonadaceae</taxon>
        <taxon>Pseudoalteromonas</taxon>
    </lineage>
</organism>
<feature type="chain" id="PRO_0000224534" description="Valine--tRNA ligase">
    <location>
        <begin position="1"/>
        <end position="951"/>
    </location>
</feature>
<feature type="coiled-coil region" evidence="1">
    <location>
        <begin position="879"/>
        <end position="950"/>
    </location>
</feature>
<feature type="short sequence motif" description="'HIGH' region">
    <location>
        <begin position="40"/>
        <end position="50"/>
    </location>
</feature>
<feature type="short sequence motif" description="'KMSKS' region">
    <location>
        <begin position="551"/>
        <end position="555"/>
    </location>
</feature>
<feature type="binding site" evidence="1">
    <location>
        <position position="554"/>
    </location>
    <ligand>
        <name>ATP</name>
        <dbReference type="ChEBI" id="CHEBI:30616"/>
    </ligand>
</feature>
<gene>
    <name evidence="1" type="primary">valS</name>
    <name type="ordered locus">PSHAa2425</name>
</gene>
<proteinExistence type="inferred from homology"/>
<name>SYV_PSET1</name>
<dbReference type="EC" id="6.1.1.9" evidence="1"/>
<dbReference type="EMBL" id="CR954246">
    <property type="protein sequence ID" value="CAI87474.1"/>
    <property type="molecule type" value="Genomic_DNA"/>
</dbReference>
<dbReference type="SMR" id="Q3II73"/>
<dbReference type="STRING" id="326442.PSHAa2425"/>
<dbReference type="KEGG" id="pha:PSHAa2425"/>
<dbReference type="PATRIC" id="fig|326442.8.peg.2338"/>
<dbReference type="eggNOG" id="COG0525">
    <property type="taxonomic scope" value="Bacteria"/>
</dbReference>
<dbReference type="HOGENOM" id="CLU_001493_0_2_6"/>
<dbReference type="BioCyc" id="PHAL326442:PSHA_RS11950-MONOMER"/>
<dbReference type="Proteomes" id="UP000006843">
    <property type="component" value="Chromosome I"/>
</dbReference>
<dbReference type="GO" id="GO:0005829">
    <property type="term" value="C:cytosol"/>
    <property type="evidence" value="ECO:0007669"/>
    <property type="project" value="TreeGrafter"/>
</dbReference>
<dbReference type="GO" id="GO:0002161">
    <property type="term" value="F:aminoacyl-tRNA deacylase activity"/>
    <property type="evidence" value="ECO:0007669"/>
    <property type="project" value="InterPro"/>
</dbReference>
<dbReference type="GO" id="GO:0005524">
    <property type="term" value="F:ATP binding"/>
    <property type="evidence" value="ECO:0007669"/>
    <property type="project" value="UniProtKB-UniRule"/>
</dbReference>
<dbReference type="GO" id="GO:0004832">
    <property type="term" value="F:valine-tRNA ligase activity"/>
    <property type="evidence" value="ECO:0007669"/>
    <property type="project" value="UniProtKB-UniRule"/>
</dbReference>
<dbReference type="GO" id="GO:0006438">
    <property type="term" value="P:valyl-tRNA aminoacylation"/>
    <property type="evidence" value="ECO:0007669"/>
    <property type="project" value="UniProtKB-UniRule"/>
</dbReference>
<dbReference type="CDD" id="cd07962">
    <property type="entry name" value="Anticodon_Ia_Val"/>
    <property type="match status" value="1"/>
</dbReference>
<dbReference type="CDD" id="cd00817">
    <property type="entry name" value="ValRS_core"/>
    <property type="match status" value="1"/>
</dbReference>
<dbReference type="FunFam" id="1.10.287.380:FF:000001">
    <property type="entry name" value="Valine--tRNA ligase"/>
    <property type="match status" value="1"/>
</dbReference>
<dbReference type="FunFam" id="1.10.730.10:FF:000007">
    <property type="entry name" value="Valine--tRNA ligase"/>
    <property type="match status" value="1"/>
</dbReference>
<dbReference type="FunFam" id="3.40.50.620:FF:000032">
    <property type="entry name" value="Valine--tRNA ligase"/>
    <property type="match status" value="1"/>
</dbReference>
<dbReference type="FunFam" id="3.40.50.620:FF:000146">
    <property type="entry name" value="Valine--tRNA ligase"/>
    <property type="match status" value="1"/>
</dbReference>
<dbReference type="FunFam" id="3.90.740.10:FF:000003">
    <property type="entry name" value="Valine--tRNA ligase"/>
    <property type="match status" value="1"/>
</dbReference>
<dbReference type="Gene3D" id="3.40.50.620">
    <property type="entry name" value="HUPs"/>
    <property type="match status" value="2"/>
</dbReference>
<dbReference type="Gene3D" id="1.10.730.10">
    <property type="entry name" value="Isoleucyl-tRNA Synthetase, Domain 1"/>
    <property type="match status" value="1"/>
</dbReference>
<dbReference type="Gene3D" id="1.10.287.380">
    <property type="entry name" value="Valyl-tRNA synthetase, C-terminal domain"/>
    <property type="match status" value="1"/>
</dbReference>
<dbReference type="Gene3D" id="3.90.740.10">
    <property type="entry name" value="Valyl/Leucyl/Isoleucyl-tRNA synthetase, editing domain"/>
    <property type="match status" value="2"/>
</dbReference>
<dbReference type="HAMAP" id="MF_02004">
    <property type="entry name" value="Val_tRNA_synth_type1"/>
    <property type="match status" value="1"/>
</dbReference>
<dbReference type="InterPro" id="IPR001412">
    <property type="entry name" value="aa-tRNA-synth_I_CS"/>
</dbReference>
<dbReference type="InterPro" id="IPR002300">
    <property type="entry name" value="aa-tRNA-synth_Ia"/>
</dbReference>
<dbReference type="InterPro" id="IPR033705">
    <property type="entry name" value="Anticodon_Ia_Val"/>
</dbReference>
<dbReference type="InterPro" id="IPR013155">
    <property type="entry name" value="M/V/L/I-tRNA-synth_anticd-bd"/>
</dbReference>
<dbReference type="InterPro" id="IPR014729">
    <property type="entry name" value="Rossmann-like_a/b/a_fold"/>
</dbReference>
<dbReference type="InterPro" id="IPR010978">
    <property type="entry name" value="tRNA-bd_arm"/>
</dbReference>
<dbReference type="InterPro" id="IPR009080">
    <property type="entry name" value="tRNAsynth_Ia_anticodon-bd"/>
</dbReference>
<dbReference type="InterPro" id="IPR037118">
    <property type="entry name" value="Val-tRNA_synth_C_sf"/>
</dbReference>
<dbReference type="InterPro" id="IPR019499">
    <property type="entry name" value="Val-tRNA_synth_tRNA-bd"/>
</dbReference>
<dbReference type="InterPro" id="IPR009008">
    <property type="entry name" value="Val/Leu/Ile-tRNA-synth_edit"/>
</dbReference>
<dbReference type="InterPro" id="IPR002303">
    <property type="entry name" value="Valyl-tRNA_ligase"/>
</dbReference>
<dbReference type="NCBIfam" id="NF004349">
    <property type="entry name" value="PRK05729.1"/>
    <property type="match status" value="1"/>
</dbReference>
<dbReference type="NCBIfam" id="TIGR00422">
    <property type="entry name" value="valS"/>
    <property type="match status" value="1"/>
</dbReference>
<dbReference type="PANTHER" id="PTHR11946:SF93">
    <property type="entry name" value="VALINE--TRNA LIGASE, CHLOROPLASTIC_MITOCHONDRIAL 2"/>
    <property type="match status" value="1"/>
</dbReference>
<dbReference type="PANTHER" id="PTHR11946">
    <property type="entry name" value="VALYL-TRNA SYNTHETASES"/>
    <property type="match status" value="1"/>
</dbReference>
<dbReference type="Pfam" id="PF08264">
    <property type="entry name" value="Anticodon_1"/>
    <property type="match status" value="1"/>
</dbReference>
<dbReference type="Pfam" id="PF00133">
    <property type="entry name" value="tRNA-synt_1"/>
    <property type="match status" value="1"/>
</dbReference>
<dbReference type="Pfam" id="PF10458">
    <property type="entry name" value="Val_tRNA-synt_C"/>
    <property type="match status" value="1"/>
</dbReference>
<dbReference type="PRINTS" id="PR00986">
    <property type="entry name" value="TRNASYNTHVAL"/>
</dbReference>
<dbReference type="SUPFAM" id="SSF47323">
    <property type="entry name" value="Anticodon-binding domain of a subclass of class I aminoacyl-tRNA synthetases"/>
    <property type="match status" value="1"/>
</dbReference>
<dbReference type="SUPFAM" id="SSF52374">
    <property type="entry name" value="Nucleotidylyl transferase"/>
    <property type="match status" value="1"/>
</dbReference>
<dbReference type="SUPFAM" id="SSF46589">
    <property type="entry name" value="tRNA-binding arm"/>
    <property type="match status" value="1"/>
</dbReference>
<dbReference type="SUPFAM" id="SSF50677">
    <property type="entry name" value="ValRS/IleRS/LeuRS editing domain"/>
    <property type="match status" value="1"/>
</dbReference>
<dbReference type="PROSITE" id="PS00178">
    <property type="entry name" value="AA_TRNA_LIGASE_I"/>
    <property type="match status" value="1"/>
</dbReference>
<comment type="function">
    <text evidence="1">Catalyzes the attachment of valine to tRNA(Val). As ValRS can inadvertently accommodate and process structurally similar amino acids such as threonine, to avoid such errors, it has a 'posttransfer' editing activity that hydrolyzes mischarged Thr-tRNA(Val) in a tRNA-dependent manner.</text>
</comment>
<comment type="catalytic activity">
    <reaction evidence="1">
        <text>tRNA(Val) + L-valine + ATP = L-valyl-tRNA(Val) + AMP + diphosphate</text>
        <dbReference type="Rhea" id="RHEA:10704"/>
        <dbReference type="Rhea" id="RHEA-COMP:9672"/>
        <dbReference type="Rhea" id="RHEA-COMP:9708"/>
        <dbReference type="ChEBI" id="CHEBI:30616"/>
        <dbReference type="ChEBI" id="CHEBI:33019"/>
        <dbReference type="ChEBI" id="CHEBI:57762"/>
        <dbReference type="ChEBI" id="CHEBI:78442"/>
        <dbReference type="ChEBI" id="CHEBI:78537"/>
        <dbReference type="ChEBI" id="CHEBI:456215"/>
        <dbReference type="EC" id="6.1.1.9"/>
    </reaction>
</comment>
<comment type="subunit">
    <text evidence="1">Monomer.</text>
</comment>
<comment type="subcellular location">
    <subcellularLocation>
        <location evidence="1">Cytoplasm</location>
    </subcellularLocation>
</comment>
<comment type="domain">
    <text evidence="1">ValRS has two distinct active sites: one for aminoacylation and one for editing. The misactivated threonine is translocated from the active site to the editing site.</text>
</comment>
<comment type="domain">
    <text evidence="1">The C-terminal coiled-coil domain is crucial for aminoacylation activity.</text>
</comment>
<comment type="similarity">
    <text evidence="1">Belongs to the class-I aminoacyl-tRNA synthetase family. ValS type 1 subfamily.</text>
</comment>
<reference key="1">
    <citation type="journal article" date="2005" name="Genome Res.">
        <title>Coping with cold: the genome of the versatile marine Antarctica bacterium Pseudoalteromonas haloplanktis TAC125.</title>
        <authorList>
            <person name="Medigue C."/>
            <person name="Krin E."/>
            <person name="Pascal G."/>
            <person name="Barbe V."/>
            <person name="Bernsel A."/>
            <person name="Bertin P.N."/>
            <person name="Cheung F."/>
            <person name="Cruveiller S."/>
            <person name="D'Amico S."/>
            <person name="Duilio A."/>
            <person name="Fang G."/>
            <person name="Feller G."/>
            <person name="Ho C."/>
            <person name="Mangenot S."/>
            <person name="Marino G."/>
            <person name="Nilsson J."/>
            <person name="Parrilli E."/>
            <person name="Rocha E.P.C."/>
            <person name="Rouy Z."/>
            <person name="Sekowska A."/>
            <person name="Tutino M.L."/>
            <person name="Vallenet D."/>
            <person name="von Heijne G."/>
            <person name="Danchin A."/>
        </authorList>
    </citation>
    <scope>NUCLEOTIDE SEQUENCE [LARGE SCALE GENOMIC DNA]</scope>
    <source>
        <strain>TAC 125</strain>
    </source>
</reference>
<protein>
    <recommendedName>
        <fullName evidence="1">Valine--tRNA ligase</fullName>
        <ecNumber evidence="1">6.1.1.9</ecNumber>
    </recommendedName>
    <alternativeName>
        <fullName evidence="1">Valyl-tRNA synthetase</fullName>
        <shortName evidence="1">ValRS</shortName>
    </alternativeName>
</protein>
<keyword id="KW-0030">Aminoacyl-tRNA synthetase</keyword>
<keyword id="KW-0067">ATP-binding</keyword>
<keyword id="KW-0175">Coiled coil</keyword>
<keyword id="KW-0963">Cytoplasm</keyword>
<keyword id="KW-0436">Ligase</keyword>
<keyword id="KW-0547">Nucleotide-binding</keyword>
<keyword id="KW-0648">Protein biosynthesis</keyword>
<keyword id="KW-1185">Reference proteome</keyword>